<reference evidence="3" key="1">
    <citation type="journal article" date="2012" name="Mol. Ecol.">
        <title>Whole transcriptome analysis of the coral Acropora millepora reveals complex responses to CO(2)-driven acidification during the initiation of calcification.</title>
        <authorList>
            <person name="Moya A."/>
            <person name="Huisman L."/>
            <person name="Ball E.E."/>
            <person name="Hayward D.C."/>
            <person name="Grasso L.C."/>
            <person name="Chua C.M."/>
            <person name="Woo H.N."/>
            <person name="Gattuso J.P."/>
            <person name="Foret S."/>
            <person name="Miller D.J."/>
        </authorList>
    </citation>
    <scope>NUCLEOTIDE SEQUENCE [MRNA]</scope>
</reference>
<reference evidence="3" key="2">
    <citation type="journal article" date="2013" name="Mol. Biol. Evol.">
        <title>The skeletal proteome of the coral Acropora millepora: the evolution of calcification by co-option and domain shuffling.</title>
        <authorList>
            <person name="Ramos-Silva P."/>
            <person name="Kaandorp J."/>
            <person name="Huisman L."/>
            <person name="Marie B."/>
            <person name="Zanella-Cleon I."/>
            <person name="Guichard N."/>
            <person name="Miller D.J."/>
            <person name="Marin F."/>
        </authorList>
    </citation>
    <scope>PROTEIN SEQUENCE OF 44-81 AND 158-168</scope>
    <scope>TISSUE SPECIFICITY</scope>
    <scope>IDENTIFICATION BY MASS SPECTROMETRY</scope>
</reference>
<evidence type="ECO:0000269" key="1">
    <source>
    </source>
</evidence>
<evidence type="ECO:0000303" key="2">
    <source>
    </source>
</evidence>
<evidence type="ECO:0000305" key="3"/>
<evidence type="ECO:0000305" key="4">
    <source>
    </source>
</evidence>
<proteinExistence type="evidence at protein level"/>
<sequence length="204" mass="22292">SYGHGAATRAKQLLVQAAQPPPAARKHPAAAMIPTGPVTAPKGRHTVEAEAQALPQQAKMQATVAAGPLSTGGVLLRLIKTMIDTKMTKEFNEIIFIISRCQLTRNCRMNSVDAIKLILPSIRGKLFGFLKARIPMXXXHGVMLDDDEYTAMPVGFPKLEIEDETRKFVFRIPKFSKRALVDPSVTPGERTPKLGNKCWNMAAA</sequence>
<keyword id="KW-0903">Direct protein sequencing</keyword>
<keyword id="KW-0964">Secreted</keyword>
<name>USOM4_ACRMI</name>
<feature type="chain" id="PRO_0000429758" description="Uncharacterized skeletal organic matrix protein 4">
    <location>
        <begin position="1" status="less than"/>
        <end position="204"/>
    </location>
</feature>
<feature type="non-terminal residue" evidence="3">
    <location>
        <position position="1"/>
    </location>
</feature>
<dbReference type="EMBL" id="JT004498">
    <property type="status" value="NOT_ANNOTATED_CDS"/>
    <property type="molecule type" value="mRNA"/>
</dbReference>
<dbReference type="OrthoDB" id="5989634at2759"/>
<dbReference type="GO" id="GO:0005576">
    <property type="term" value="C:extracellular region"/>
    <property type="evidence" value="ECO:0007669"/>
    <property type="project" value="UniProtKB-SubCell"/>
</dbReference>
<organism>
    <name type="scientific">Acropora millepora</name>
    <name type="common">Staghorn coral</name>
    <name type="synonym">Heteropora millepora</name>
    <dbReference type="NCBI Taxonomy" id="45264"/>
    <lineage>
        <taxon>Eukaryota</taxon>
        <taxon>Metazoa</taxon>
        <taxon>Cnidaria</taxon>
        <taxon>Anthozoa</taxon>
        <taxon>Hexacorallia</taxon>
        <taxon>Scleractinia</taxon>
        <taxon>Astrocoeniina</taxon>
        <taxon>Acroporidae</taxon>
        <taxon>Acropora</taxon>
    </lineage>
</organism>
<comment type="subcellular location">
    <subcellularLocation>
        <location evidence="4">Secreted</location>
    </subcellularLocation>
</comment>
<comment type="tissue specificity">
    <text evidence="1">Component of the acid-soluble organic matrix of the aragonitic skeleton (at protein level).</text>
</comment>
<protein>
    <recommendedName>
        <fullName evidence="2">Uncharacterized skeletal organic matrix protein 4</fullName>
        <shortName evidence="2">Uncharacterized SOMP-4</shortName>
    </recommendedName>
</protein>
<accession>B8UU74</accession>